<dbReference type="EMBL" id="CP000559">
    <property type="protein sequence ID" value="ABN06556.1"/>
    <property type="status" value="ALT_INIT"/>
    <property type="molecule type" value="Genomic_DNA"/>
</dbReference>
<dbReference type="RefSeq" id="WP_048061969.1">
    <property type="nucleotide sequence ID" value="NC_008942.1"/>
</dbReference>
<dbReference type="SMR" id="A2SQF0"/>
<dbReference type="STRING" id="410358.Mlab_0380"/>
<dbReference type="GeneID" id="4794764"/>
<dbReference type="KEGG" id="mla:Mlab_0380"/>
<dbReference type="eggNOG" id="arCOG02248">
    <property type="taxonomic scope" value="Archaea"/>
</dbReference>
<dbReference type="HOGENOM" id="CLU_052508_3_0_2"/>
<dbReference type="OrthoDB" id="30946at2157"/>
<dbReference type="UniPathway" id="UPA00148"/>
<dbReference type="Proteomes" id="UP000000365">
    <property type="component" value="Chromosome"/>
</dbReference>
<dbReference type="GO" id="GO:0043190">
    <property type="term" value="C:ATP-binding cassette (ABC) transporter complex"/>
    <property type="evidence" value="ECO:0007669"/>
    <property type="project" value="InterPro"/>
</dbReference>
<dbReference type="GO" id="GO:0015087">
    <property type="term" value="F:cobalt ion transmembrane transporter activity"/>
    <property type="evidence" value="ECO:0007669"/>
    <property type="project" value="UniProtKB-UniRule"/>
</dbReference>
<dbReference type="GO" id="GO:0009236">
    <property type="term" value="P:cobalamin biosynthetic process"/>
    <property type="evidence" value="ECO:0007669"/>
    <property type="project" value="UniProtKB-UniRule"/>
</dbReference>
<dbReference type="Gene3D" id="1.10.1760.20">
    <property type="match status" value="1"/>
</dbReference>
<dbReference type="HAMAP" id="MF_01462">
    <property type="entry name" value="CbiM"/>
    <property type="match status" value="1"/>
</dbReference>
<dbReference type="InterPro" id="IPR018024">
    <property type="entry name" value="CbiM"/>
</dbReference>
<dbReference type="InterPro" id="IPR002751">
    <property type="entry name" value="CbiM/NikMN"/>
</dbReference>
<dbReference type="NCBIfam" id="TIGR00123">
    <property type="entry name" value="cbiM"/>
    <property type="match status" value="1"/>
</dbReference>
<dbReference type="NCBIfam" id="NF006184">
    <property type="entry name" value="PRK08319.1"/>
    <property type="match status" value="1"/>
</dbReference>
<dbReference type="PANTHER" id="PTHR43627">
    <property type="match status" value="1"/>
</dbReference>
<dbReference type="PANTHER" id="PTHR43627:SF1">
    <property type="entry name" value="COBALT TRANSPORT PROTEIN CBIM"/>
    <property type="match status" value="1"/>
</dbReference>
<dbReference type="Pfam" id="PF01891">
    <property type="entry name" value="CbiM"/>
    <property type="match status" value="1"/>
</dbReference>
<feature type="chain" id="PRO_0000411155" description="Putative cobalt transport protein CbiM 1">
    <location>
        <begin position="1"/>
        <end position="231"/>
    </location>
</feature>
<feature type="transmembrane region" description="Helical" evidence="1">
    <location>
        <begin position="6"/>
        <end position="26"/>
    </location>
</feature>
<feature type="transmembrane region" description="Helical" evidence="1">
    <location>
        <begin position="41"/>
        <end position="61"/>
    </location>
</feature>
<feature type="transmembrane region" description="Helical" evidence="1">
    <location>
        <begin position="79"/>
        <end position="99"/>
    </location>
</feature>
<feature type="transmembrane region" description="Helical" evidence="1">
    <location>
        <begin position="107"/>
        <end position="127"/>
    </location>
</feature>
<feature type="transmembrane region" description="Helical" evidence="1">
    <location>
        <begin position="136"/>
        <end position="156"/>
    </location>
</feature>
<feature type="transmembrane region" description="Helical" evidence="1">
    <location>
        <begin position="172"/>
        <end position="192"/>
    </location>
</feature>
<sequence length="231" mass="24296">MHFMDGFLPIGWCVFWAVLAAPFLIYGMWKITKMINNDRHVLPLMAVCGAFIFVVSLVDIPSPTGSCSHPTGTGLSASFFGPAVTSVLGLIILVFQALLLGHGGFTTLGATAFSMAVMGPLAAWLVFKGLRKTGRVPLGPAVFCAAVVANCVTYLITSLQIALAYPVEGSVLTAFLAAAAVFAVVQIPISIIEGIISGLVATYIARIKPEILQKLGVISGEEVKKVLSEQA</sequence>
<evidence type="ECO:0000255" key="1">
    <source>
        <dbReference type="HAMAP-Rule" id="MF_01462"/>
    </source>
</evidence>
<evidence type="ECO:0000305" key="2"/>
<proteinExistence type="inferred from homology"/>
<keyword id="KW-1003">Cell membrane</keyword>
<keyword id="KW-0169">Cobalamin biosynthesis</keyword>
<keyword id="KW-0170">Cobalt</keyword>
<keyword id="KW-0171">Cobalt transport</keyword>
<keyword id="KW-0406">Ion transport</keyword>
<keyword id="KW-0472">Membrane</keyword>
<keyword id="KW-1185">Reference proteome</keyword>
<keyword id="KW-0812">Transmembrane</keyword>
<keyword id="KW-1133">Transmembrane helix</keyword>
<keyword id="KW-0813">Transport</keyword>
<name>CBIM1_METLZ</name>
<comment type="function">
    <text evidence="1">Part of the energy-coupling factor (ECF) transporter complex CbiMNOQ involved in cobalt import.</text>
</comment>
<comment type="pathway">
    <text evidence="1">Cofactor biosynthesis; adenosylcobalamin biosynthesis.</text>
</comment>
<comment type="subunit">
    <text evidence="1">Forms an energy-coupling factor (ECF) transporter complex composed of an ATP-binding protein (A component, CbiO), a transmembrane protein (T component, CbiQ) and 2 possible substrate-capture proteins (S components, CbiM and CbiN) of unknown stoichimetry.</text>
</comment>
<comment type="subcellular location">
    <subcellularLocation>
        <location evidence="1">Cell membrane</location>
        <topology evidence="1">Multi-pass membrane protein</topology>
    </subcellularLocation>
</comment>
<comment type="similarity">
    <text evidence="1">Belongs to the CbiM family.</text>
</comment>
<comment type="sequence caution" evidence="2">
    <conflict type="erroneous initiation">
        <sequence resource="EMBL-CDS" id="ABN06556"/>
    </conflict>
    <text>Extended N-terminus.</text>
</comment>
<protein>
    <recommendedName>
        <fullName evidence="1">Putative cobalt transport protein CbiM 1</fullName>
    </recommendedName>
    <alternativeName>
        <fullName evidence="1">Energy-coupling factor transporter probable substrate-capture protein CbiM 1</fullName>
        <shortName evidence="1">ECF transporter S component CbiM 1</shortName>
    </alternativeName>
</protein>
<accession>A2SQF0</accession>
<reference key="1">
    <citation type="journal article" date="2009" name="Stand. Genomic Sci.">
        <title>Complete genome sequence of Methanocorpusculum labreanum type strain Z.</title>
        <authorList>
            <person name="Anderson I.J."/>
            <person name="Sieprawska-Lupa M."/>
            <person name="Goltsman E."/>
            <person name="Lapidus A."/>
            <person name="Copeland A."/>
            <person name="Glavina Del Rio T."/>
            <person name="Tice H."/>
            <person name="Dalin E."/>
            <person name="Barry K."/>
            <person name="Pitluck S."/>
            <person name="Hauser L."/>
            <person name="Land M."/>
            <person name="Lucas S."/>
            <person name="Richardson P."/>
            <person name="Whitman W.B."/>
            <person name="Kyrpides N.C."/>
        </authorList>
    </citation>
    <scope>NUCLEOTIDE SEQUENCE [LARGE SCALE GENOMIC DNA]</scope>
    <source>
        <strain>ATCC 43576 / DSM 4855 / Z</strain>
    </source>
</reference>
<gene>
    <name evidence="1" type="primary">cbiM1</name>
    <name type="ordered locus">Mlab_0380</name>
</gene>
<organism>
    <name type="scientific">Methanocorpusculum labreanum (strain ATCC 43576 / DSM 4855 / Z)</name>
    <dbReference type="NCBI Taxonomy" id="410358"/>
    <lineage>
        <taxon>Archaea</taxon>
        <taxon>Methanobacteriati</taxon>
        <taxon>Methanobacteriota</taxon>
        <taxon>Stenosarchaea group</taxon>
        <taxon>Methanomicrobia</taxon>
        <taxon>Methanomicrobiales</taxon>
        <taxon>Methanocorpusculaceae</taxon>
        <taxon>Methanocorpusculum</taxon>
    </lineage>
</organism>